<protein>
    <recommendedName>
        <fullName>Matrilysin</fullName>
        <ecNumber>3.4.24.23</ecNumber>
    </recommendedName>
    <alternativeName>
        <fullName>Matrin</fullName>
    </alternativeName>
    <alternativeName>
        <fullName>Matrix metalloproteinase-7</fullName>
        <shortName>MMP-7</shortName>
    </alternativeName>
    <alternativeName>
        <fullName>Pump-1 protease</fullName>
    </alternativeName>
    <alternativeName>
        <fullName>Uterine metalloproteinase</fullName>
    </alternativeName>
</protein>
<evidence type="ECO:0000250" key="1"/>
<evidence type="ECO:0000255" key="2"/>
<evidence type="ECO:0000255" key="3">
    <source>
        <dbReference type="PROSITE-ProRule" id="PRU10095"/>
    </source>
</evidence>
<evidence type="ECO:0000269" key="4">
    <source>
    </source>
</evidence>
<evidence type="ECO:0000305" key="5"/>
<dbReference type="EC" id="3.4.24.23"/>
<dbReference type="EMBL" id="L36238">
    <property type="protein sequence ID" value="AAA99984.1"/>
    <property type="molecule type" value="Genomic_DNA"/>
</dbReference>
<dbReference type="EMBL" id="L36243">
    <property type="protein sequence ID" value="AAA99984.1"/>
    <property type="status" value="JOINED"/>
    <property type="molecule type" value="Genomic_DNA"/>
</dbReference>
<dbReference type="EMBL" id="L36242">
    <property type="protein sequence ID" value="AAA99984.1"/>
    <property type="status" value="JOINED"/>
    <property type="molecule type" value="Genomic_DNA"/>
</dbReference>
<dbReference type="EMBL" id="L36241">
    <property type="protein sequence ID" value="AAA99984.1"/>
    <property type="status" value="JOINED"/>
    <property type="molecule type" value="Genomic_DNA"/>
</dbReference>
<dbReference type="EMBL" id="L36240">
    <property type="protein sequence ID" value="AAA99984.1"/>
    <property type="status" value="JOINED"/>
    <property type="molecule type" value="Genomic_DNA"/>
</dbReference>
<dbReference type="EMBL" id="L36239">
    <property type="protein sequence ID" value="AAA99984.1"/>
    <property type="status" value="JOINED"/>
    <property type="molecule type" value="Genomic_DNA"/>
</dbReference>
<dbReference type="EMBL" id="L36244">
    <property type="protein sequence ID" value="AAA99983.1"/>
    <property type="molecule type" value="mRNA"/>
</dbReference>
<dbReference type="CCDS" id="CCDS40531.1"/>
<dbReference type="RefSeq" id="NP_034940.3">
    <property type="nucleotide sequence ID" value="NM_010810.6"/>
</dbReference>
<dbReference type="SMR" id="Q10738"/>
<dbReference type="FunCoup" id="Q10738">
    <property type="interactions" value="51"/>
</dbReference>
<dbReference type="STRING" id="10090.ENSMUSP00000018767"/>
<dbReference type="BindingDB" id="Q10738"/>
<dbReference type="ChEMBL" id="CHEMBL5465303"/>
<dbReference type="MEROPS" id="M10.008"/>
<dbReference type="PhosphoSitePlus" id="Q10738"/>
<dbReference type="PaxDb" id="10090-ENSMUSP00000018767"/>
<dbReference type="PeptideAtlas" id="Q10738"/>
<dbReference type="ProteomicsDB" id="295694"/>
<dbReference type="Ensembl" id="ENSMUST00000018767.9">
    <property type="protein sequence ID" value="ENSMUSP00000018767.9"/>
    <property type="gene ID" value="ENSMUSG00000018623.11"/>
</dbReference>
<dbReference type="GeneID" id="17393"/>
<dbReference type="AGR" id="MGI:103189"/>
<dbReference type="MGI" id="MGI:103189">
    <property type="gene designation" value="Mmp7"/>
</dbReference>
<dbReference type="eggNOG" id="KOG1565">
    <property type="taxonomic scope" value="Eukaryota"/>
</dbReference>
<dbReference type="InParanoid" id="Q10738"/>
<dbReference type="BRENDA" id="3.4.24.23">
    <property type="organism ID" value="3474"/>
</dbReference>
<dbReference type="Reactome" id="R-MMU-1442490">
    <property type="pathway name" value="Collagen degradation"/>
</dbReference>
<dbReference type="Reactome" id="R-MMU-1474228">
    <property type="pathway name" value="Degradation of the extracellular matrix"/>
</dbReference>
<dbReference type="Reactome" id="R-MMU-1592389">
    <property type="pathway name" value="Activation of Matrix Metalloproteinases"/>
</dbReference>
<dbReference type="Reactome" id="R-MMU-2022090">
    <property type="pathway name" value="Assembly of collagen fibrils and other multimeric structures"/>
</dbReference>
<dbReference type="Reactome" id="R-MMU-9009391">
    <property type="pathway name" value="Extra-nuclear estrogen signaling"/>
</dbReference>
<dbReference type="ChiTaRS" id="Mmp7">
    <property type="organism name" value="mouse"/>
</dbReference>
<dbReference type="PRO" id="PR:Q10738"/>
<dbReference type="Proteomes" id="UP000000589">
    <property type="component" value="Chromosome 9"/>
</dbReference>
<dbReference type="RNAct" id="Q10738">
    <property type="molecule type" value="protein"/>
</dbReference>
<dbReference type="GO" id="GO:0031012">
    <property type="term" value="C:extracellular matrix"/>
    <property type="evidence" value="ECO:0007669"/>
    <property type="project" value="InterPro"/>
</dbReference>
<dbReference type="GO" id="GO:0005576">
    <property type="term" value="C:extracellular region"/>
    <property type="evidence" value="ECO:0000304"/>
    <property type="project" value="Reactome"/>
</dbReference>
<dbReference type="GO" id="GO:0004222">
    <property type="term" value="F:metalloendopeptidase activity"/>
    <property type="evidence" value="ECO:0000304"/>
    <property type="project" value="Reactome"/>
</dbReference>
<dbReference type="GO" id="GO:0008233">
    <property type="term" value="F:peptidase activity"/>
    <property type="evidence" value="ECO:0000314"/>
    <property type="project" value="MGI"/>
</dbReference>
<dbReference type="GO" id="GO:0008270">
    <property type="term" value="F:zinc ion binding"/>
    <property type="evidence" value="ECO:0007669"/>
    <property type="project" value="InterPro"/>
</dbReference>
<dbReference type="GO" id="GO:0002780">
    <property type="term" value="P:antibacterial peptide biosynthetic process"/>
    <property type="evidence" value="ECO:0000315"/>
    <property type="project" value="MGI"/>
</dbReference>
<dbReference type="GO" id="GO:0002779">
    <property type="term" value="P:antibacterial peptide secretion"/>
    <property type="evidence" value="ECO:0000315"/>
    <property type="project" value="MGI"/>
</dbReference>
<dbReference type="GO" id="GO:0030574">
    <property type="term" value="P:collagen catabolic process"/>
    <property type="evidence" value="ECO:0007669"/>
    <property type="project" value="UniProtKB-KW"/>
</dbReference>
<dbReference type="GO" id="GO:0042742">
    <property type="term" value="P:defense response to bacterium"/>
    <property type="evidence" value="ECO:0000315"/>
    <property type="project" value="MGI"/>
</dbReference>
<dbReference type="GO" id="GO:0050829">
    <property type="term" value="P:defense response to Gram-negative bacterium"/>
    <property type="evidence" value="ECO:0000315"/>
    <property type="project" value="MGI"/>
</dbReference>
<dbReference type="GO" id="GO:0050830">
    <property type="term" value="P:defense response to Gram-positive bacterium"/>
    <property type="evidence" value="ECO:0000315"/>
    <property type="project" value="MGI"/>
</dbReference>
<dbReference type="GO" id="GO:0006509">
    <property type="term" value="P:membrane protein ectodomain proteolysis"/>
    <property type="evidence" value="ECO:0007669"/>
    <property type="project" value="Ensembl"/>
</dbReference>
<dbReference type="GO" id="GO:0031293">
    <property type="term" value="P:membrane protein intracellular domain proteolysis"/>
    <property type="evidence" value="ECO:0007669"/>
    <property type="project" value="Ensembl"/>
</dbReference>
<dbReference type="GO" id="GO:0030335">
    <property type="term" value="P:positive regulation of cell migration"/>
    <property type="evidence" value="ECO:0007669"/>
    <property type="project" value="Ensembl"/>
</dbReference>
<dbReference type="GO" id="GO:0006508">
    <property type="term" value="P:proteolysis"/>
    <property type="evidence" value="ECO:0000314"/>
    <property type="project" value="MGI"/>
</dbReference>
<dbReference type="GO" id="GO:0042127">
    <property type="term" value="P:regulation of cell population proliferation"/>
    <property type="evidence" value="ECO:0000316"/>
    <property type="project" value="MGI"/>
</dbReference>
<dbReference type="GO" id="GO:0009410">
    <property type="term" value="P:response to xenobiotic stimulus"/>
    <property type="evidence" value="ECO:0000315"/>
    <property type="project" value="MGI"/>
</dbReference>
<dbReference type="CDD" id="cd04278">
    <property type="entry name" value="ZnMc_MMP"/>
    <property type="match status" value="1"/>
</dbReference>
<dbReference type="FunFam" id="3.40.390.10:FF:000007">
    <property type="entry name" value="Collagenase 3"/>
    <property type="match status" value="1"/>
</dbReference>
<dbReference type="Gene3D" id="3.40.390.10">
    <property type="entry name" value="Collagenase (Catalytic Domain)"/>
    <property type="match status" value="1"/>
</dbReference>
<dbReference type="InterPro" id="IPR033739">
    <property type="entry name" value="M10A_MMP"/>
</dbReference>
<dbReference type="InterPro" id="IPR024079">
    <property type="entry name" value="MetalloPept_cat_dom_sf"/>
</dbReference>
<dbReference type="InterPro" id="IPR001818">
    <property type="entry name" value="Pept_M10_metallopeptidase"/>
</dbReference>
<dbReference type="InterPro" id="IPR021190">
    <property type="entry name" value="Pept_M10A"/>
</dbReference>
<dbReference type="InterPro" id="IPR021158">
    <property type="entry name" value="Pept_M10A_Zn_BS"/>
</dbReference>
<dbReference type="InterPro" id="IPR006026">
    <property type="entry name" value="Peptidase_Metallo"/>
</dbReference>
<dbReference type="InterPro" id="IPR002477">
    <property type="entry name" value="Peptidoglycan-bd-like"/>
</dbReference>
<dbReference type="InterPro" id="IPR036365">
    <property type="entry name" value="PGBD-like_sf"/>
</dbReference>
<dbReference type="PANTHER" id="PTHR10201:SF143">
    <property type="entry name" value="MATRILYSIN"/>
    <property type="match status" value="1"/>
</dbReference>
<dbReference type="PANTHER" id="PTHR10201">
    <property type="entry name" value="MATRIX METALLOPROTEINASE"/>
    <property type="match status" value="1"/>
</dbReference>
<dbReference type="Pfam" id="PF00413">
    <property type="entry name" value="Peptidase_M10"/>
    <property type="match status" value="1"/>
</dbReference>
<dbReference type="Pfam" id="PF01471">
    <property type="entry name" value="PG_binding_1"/>
    <property type="match status" value="1"/>
</dbReference>
<dbReference type="PRINTS" id="PR00138">
    <property type="entry name" value="MATRIXIN"/>
</dbReference>
<dbReference type="SMART" id="SM00235">
    <property type="entry name" value="ZnMc"/>
    <property type="match status" value="1"/>
</dbReference>
<dbReference type="SUPFAM" id="SSF55486">
    <property type="entry name" value="Metalloproteases ('zincins'), catalytic domain"/>
    <property type="match status" value="1"/>
</dbReference>
<dbReference type="SUPFAM" id="SSF47090">
    <property type="entry name" value="PGBD-like"/>
    <property type="match status" value="1"/>
</dbReference>
<dbReference type="PROSITE" id="PS00546">
    <property type="entry name" value="CYSTEINE_SWITCH"/>
    <property type="match status" value="1"/>
</dbReference>
<dbReference type="PROSITE" id="PS00142">
    <property type="entry name" value="ZINC_PROTEASE"/>
    <property type="match status" value="1"/>
</dbReference>
<keyword id="KW-0106">Calcium</keyword>
<keyword id="KW-0177">Collagen degradation</keyword>
<keyword id="KW-0272">Extracellular matrix</keyword>
<keyword id="KW-0378">Hydrolase</keyword>
<keyword id="KW-0479">Metal-binding</keyword>
<keyword id="KW-0482">Metalloprotease</keyword>
<keyword id="KW-0645">Protease</keyword>
<keyword id="KW-1185">Reference proteome</keyword>
<keyword id="KW-0964">Secreted</keyword>
<keyword id="KW-0732">Signal</keyword>
<keyword id="KW-0862">Zinc</keyword>
<keyword id="KW-0865">Zymogen</keyword>
<accession>Q10738</accession>
<name>MMP7_MOUSE</name>
<gene>
    <name type="primary">Mmp7</name>
</gene>
<organism>
    <name type="scientific">Mus musculus</name>
    <name type="common">Mouse</name>
    <dbReference type="NCBI Taxonomy" id="10090"/>
    <lineage>
        <taxon>Eukaryota</taxon>
        <taxon>Metazoa</taxon>
        <taxon>Chordata</taxon>
        <taxon>Craniata</taxon>
        <taxon>Vertebrata</taxon>
        <taxon>Euteleostomi</taxon>
        <taxon>Mammalia</taxon>
        <taxon>Eutheria</taxon>
        <taxon>Euarchontoglires</taxon>
        <taxon>Glires</taxon>
        <taxon>Rodentia</taxon>
        <taxon>Myomorpha</taxon>
        <taxon>Muroidea</taxon>
        <taxon>Muridae</taxon>
        <taxon>Murinae</taxon>
        <taxon>Mus</taxon>
        <taxon>Mus</taxon>
    </lineage>
</organism>
<comment type="function">
    <text evidence="1">Degrades casein, gelatins of types I, III, IV, and V, and fibronectin. Activates procollagenase (By similarity).</text>
</comment>
<comment type="function">
    <text>May play a role in tissue reorganization.</text>
</comment>
<comment type="catalytic activity">
    <reaction>
        <text>Cleavage of 14-Ala-|-Leu-15 and 16-Tyr-|-Leu-17 in B chain of insulin. No action on collagen types I, II, IV, V. Cleaves gelatin chain alpha2(I) &gt; alpha1(I).</text>
        <dbReference type="EC" id="3.4.24.23"/>
    </reaction>
</comment>
<comment type="cofactor">
    <cofactor evidence="1">
        <name>Ca(2+)</name>
        <dbReference type="ChEBI" id="CHEBI:29108"/>
    </cofactor>
    <text evidence="1">Binds 2 calcium ions per subunit.</text>
</comment>
<comment type="cofactor">
    <cofactor evidence="1">
        <name>Zn(2+)</name>
        <dbReference type="ChEBI" id="CHEBI:29105"/>
    </cofactor>
    <text evidence="1">Binds 2 Zn(2+) ions per subunit.</text>
</comment>
<comment type="subcellular location">
    <subcellularLocation>
        <location evidence="5">Secreted</location>
        <location evidence="5">Extracellular space</location>
        <location evidence="5">Extracellular matrix</location>
    </subcellularLocation>
</comment>
<comment type="tissue specificity">
    <text evidence="4">Expressed in the intestinal epithelium (at protein level).</text>
</comment>
<comment type="domain">
    <text>The conserved cysteine present in the cysteine-switch motif binds the catalytic zinc ion, thus inhibiting the enzyme. The dissociation of the cysteine from the zinc ion upon the activation-peptide release activates the enzyme.</text>
</comment>
<comment type="similarity">
    <text evidence="5">Belongs to the peptidase M10A family.</text>
</comment>
<feature type="signal peptide" evidence="2">
    <location>
        <begin position="1"/>
        <end position="17"/>
    </location>
</feature>
<feature type="propeptide" id="PRO_0000028740" description="Activation peptide" evidence="1">
    <location>
        <begin position="18"/>
        <end position="94"/>
    </location>
</feature>
<feature type="chain" id="PRO_0000028741" description="Matrilysin">
    <location>
        <begin position="95"/>
        <end position="264"/>
    </location>
</feature>
<feature type="short sequence motif" description="Cysteine switch" evidence="1">
    <location>
        <begin position="85"/>
        <end position="92"/>
    </location>
</feature>
<feature type="active site" evidence="3">
    <location>
        <position position="215"/>
    </location>
</feature>
<feature type="binding site" description="in inhibited form" evidence="1">
    <location>
        <position position="87"/>
    </location>
    <ligand>
        <name>Zn(2+)</name>
        <dbReference type="ChEBI" id="CHEBI:29105"/>
        <label>2</label>
        <note>catalytic</note>
    </ligand>
</feature>
<feature type="binding site" evidence="1">
    <location>
        <position position="153"/>
    </location>
    <ligand>
        <name>Ca(2+)</name>
        <dbReference type="ChEBI" id="CHEBI:29108"/>
        <label>1</label>
    </ligand>
</feature>
<feature type="binding site" evidence="1">
    <location>
        <position position="163"/>
    </location>
    <ligand>
        <name>Zn(2+)</name>
        <dbReference type="ChEBI" id="CHEBI:29105"/>
        <label>1</label>
    </ligand>
</feature>
<feature type="binding site" evidence="1">
    <location>
        <position position="165"/>
    </location>
    <ligand>
        <name>Zn(2+)</name>
        <dbReference type="ChEBI" id="CHEBI:29105"/>
        <label>1</label>
    </ligand>
</feature>
<feature type="binding site" evidence="1">
    <location>
        <position position="170"/>
    </location>
    <ligand>
        <name>Ca(2+)</name>
        <dbReference type="ChEBI" id="CHEBI:29108"/>
        <label>2</label>
    </ligand>
</feature>
<feature type="binding site" evidence="1">
    <location>
        <position position="171"/>
    </location>
    <ligand>
        <name>Ca(2+)</name>
        <dbReference type="ChEBI" id="CHEBI:29108"/>
        <label>2</label>
    </ligand>
</feature>
<feature type="binding site" evidence="1">
    <location>
        <position position="173"/>
    </location>
    <ligand>
        <name>Ca(2+)</name>
        <dbReference type="ChEBI" id="CHEBI:29108"/>
        <label>2</label>
    </ligand>
</feature>
<feature type="binding site" evidence="1">
    <location>
        <position position="175"/>
    </location>
    <ligand>
        <name>Ca(2+)</name>
        <dbReference type="ChEBI" id="CHEBI:29108"/>
        <label>2</label>
    </ligand>
</feature>
<feature type="binding site" evidence="1">
    <location>
        <position position="178"/>
    </location>
    <ligand>
        <name>Zn(2+)</name>
        <dbReference type="ChEBI" id="CHEBI:29105"/>
        <label>1</label>
    </ligand>
</feature>
<feature type="binding site" evidence="1">
    <location>
        <position position="185"/>
    </location>
    <ligand>
        <name>Ca(2+)</name>
        <dbReference type="ChEBI" id="CHEBI:29108"/>
        <label>1</label>
    </ligand>
</feature>
<feature type="binding site" evidence="1">
    <location>
        <position position="187"/>
    </location>
    <ligand>
        <name>Ca(2+)</name>
        <dbReference type="ChEBI" id="CHEBI:29108"/>
        <label>1</label>
    </ligand>
</feature>
<feature type="binding site" evidence="1">
    <location>
        <position position="189"/>
    </location>
    <ligand>
        <name>Ca(2+)</name>
        <dbReference type="ChEBI" id="CHEBI:29108"/>
        <label>1</label>
    </ligand>
</feature>
<feature type="binding site" evidence="1">
    <location>
        <position position="191"/>
    </location>
    <ligand>
        <name>Zn(2+)</name>
        <dbReference type="ChEBI" id="CHEBI:29105"/>
        <label>1</label>
    </ligand>
</feature>
<feature type="binding site" evidence="1">
    <location>
        <position position="193"/>
    </location>
    <ligand>
        <name>Ca(2+)</name>
        <dbReference type="ChEBI" id="CHEBI:29108"/>
        <label>2</label>
    </ligand>
</feature>
<feature type="binding site" evidence="1">
    <location>
        <position position="196"/>
    </location>
    <ligand>
        <name>Ca(2+)</name>
        <dbReference type="ChEBI" id="CHEBI:29108"/>
        <label>2</label>
    </ligand>
</feature>
<feature type="binding site" evidence="1">
    <location>
        <position position="214"/>
    </location>
    <ligand>
        <name>Zn(2+)</name>
        <dbReference type="ChEBI" id="CHEBI:29105"/>
        <label>2</label>
        <note>catalytic</note>
    </ligand>
</feature>
<feature type="binding site" evidence="1">
    <location>
        <position position="218"/>
    </location>
    <ligand>
        <name>Zn(2+)</name>
        <dbReference type="ChEBI" id="CHEBI:29105"/>
        <label>2</label>
        <note>catalytic</note>
    </ligand>
</feature>
<feature type="binding site" evidence="1">
    <location>
        <position position="224"/>
    </location>
    <ligand>
        <name>Zn(2+)</name>
        <dbReference type="ChEBI" id="CHEBI:29105"/>
        <label>2</label>
        <note>catalytic</note>
    </ligand>
</feature>
<feature type="sequence conflict" description="In Ref. 1; AAA99983." evidence="5" ref="1">
    <original>G</original>
    <variation>D</variation>
    <location>
        <position position="201"/>
    </location>
</feature>
<sequence>MQLTLFCFVCLLPGHLALPLSQEAGDVSAHQWEQAQNYLRKFYPHDSKTKKVNSLVDNLKEMQKFFGLPMTGKLSPYIMEIMQKPRCGVPDVAEYSLMPNSPKWHSRIVTYRIVSYTSDLPRIVVDQIVKKALRMWSMQIPLNFKRVSWGTADIIIGFARRDHGDSFPFDGPGNTLGHAFAPGPGLGGDAHFDKDEYWTDGEDAGVNFLFAATHEFGHSLGLSHSSVPGTVMYPTYQRDYSEDFSLTKDDIAGIQKLYGKRNTL</sequence>
<proteinExistence type="evidence at protein level"/>
<reference key="1">
    <citation type="journal article" date="1995" name="Mol. Biol. Cell">
        <title>The metalloproteinase matrilysin is preferentially expressed by epithelial cells in a tissue-restricted pattern in the mouse.</title>
        <authorList>
            <person name="Wilson C.L."/>
            <person name="Heppner K.J."/>
            <person name="Rudolph L.A."/>
            <person name="Matrisian L.M."/>
        </authorList>
    </citation>
    <scope>NUCLEOTIDE SEQUENCE [GENOMIC DNA / MRNA]</scope>
    <source>
        <strain>ICR</strain>
        <tissue>Uterus</tissue>
    </source>
</reference>
<reference key="2">
    <citation type="journal article" date="2012" name="EMBO J.">
        <title>Nuclear receptor binding protein 1 regulates intestinal progenitor cell homeostasis and tumour formation.</title>
        <authorList>
            <person name="Wilson C.H."/>
            <person name="Crombie C."/>
            <person name="van der Weyden L."/>
            <person name="Poulogiannis G."/>
            <person name="Rust A.G."/>
            <person name="Pardo M."/>
            <person name="Gracia T."/>
            <person name="Yu L."/>
            <person name="Choudhary J."/>
            <person name="Poulin G.B."/>
            <person name="McIntyre R.E."/>
            <person name="Winton D.J."/>
            <person name="March H.N."/>
            <person name="Arends M.J."/>
            <person name="Fraser A.G."/>
            <person name="Adams D.J."/>
        </authorList>
    </citation>
    <scope>TISSUE SPECIFICITY</scope>
</reference>